<feature type="chain" id="PRO_0000189178" description="1-deoxy-D-xylulose-5-phosphate synthase">
    <location>
        <begin position="1"/>
        <end position="635"/>
    </location>
</feature>
<feature type="binding site" evidence="1">
    <location>
        <position position="79"/>
    </location>
    <ligand>
        <name>thiamine diphosphate</name>
        <dbReference type="ChEBI" id="CHEBI:58937"/>
    </ligand>
</feature>
<feature type="binding site" evidence="1">
    <location>
        <begin position="120"/>
        <end position="122"/>
    </location>
    <ligand>
        <name>thiamine diphosphate</name>
        <dbReference type="ChEBI" id="CHEBI:58937"/>
    </ligand>
</feature>
<feature type="binding site" evidence="1">
    <location>
        <position position="151"/>
    </location>
    <ligand>
        <name>Mg(2+)</name>
        <dbReference type="ChEBI" id="CHEBI:18420"/>
    </ligand>
</feature>
<feature type="binding site" evidence="1">
    <location>
        <begin position="152"/>
        <end position="153"/>
    </location>
    <ligand>
        <name>thiamine diphosphate</name>
        <dbReference type="ChEBI" id="CHEBI:58937"/>
    </ligand>
</feature>
<feature type="binding site" evidence="1">
    <location>
        <position position="182"/>
    </location>
    <ligand>
        <name>Mg(2+)</name>
        <dbReference type="ChEBI" id="CHEBI:18420"/>
    </ligand>
</feature>
<feature type="binding site" evidence="1">
    <location>
        <position position="182"/>
    </location>
    <ligand>
        <name>thiamine diphosphate</name>
        <dbReference type="ChEBI" id="CHEBI:58937"/>
    </ligand>
</feature>
<feature type="binding site" evidence="1">
    <location>
        <position position="291"/>
    </location>
    <ligand>
        <name>thiamine diphosphate</name>
        <dbReference type="ChEBI" id="CHEBI:58937"/>
    </ligand>
</feature>
<feature type="binding site" evidence="1">
    <location>
        <position position="372"/>
    </location>
    <ligand>
        <name>thiamine diphosphate</name>
        <dbReference type="ChEBI" id="CHEBI:58937"/>
    </ligand>
</feature>
<keyword id="KW-0414">Isoprene biosynthesis</keyword>
<keyword id="KW-0460">Magnesium</keyword>
<keyword id="KW-0479">Metal-binding</keyword>
<keyword id="KW-1185">Reference proteome</keyword>
<keyword id="KW-0784">Thiamine biosynthesis</keyword>
<keyword id="KW-0786">Thiamine pyrophosphate</keyword>
<keyword id="KW-0808">Transferase</keyword>
<comment type="function">
    <text evidence="1">Catalyzes the acyloin condensation reaction between C atoms 2 and 3 of pyruvate and glyceraldehyde 3-phosphate to yield 1-deoxy-D-xylulose-5-phosphate (DXP).</text>
</comment>
<comment type="catalytic activity">
    <reaction evidence="1">
        <text>D-glyceraldehyde 3-phosphate + pyruvate + H(+) = 1-deoxy-D-xylulose 5-phosphate + CO2</text>
        <dbReference type="Rhea" id="RHEA:12605"/>
        <dbReference type="ChEBI" id="CHEBI:15361"/>
        <dbReference type="ChEBI" id="CHEBI:15378"/>
        <dbReference type="ChEBI" id="CHEBI:16526"/>
        <dbReference type="ChEBI" id="CHEBI:57792"/>
        <dbReference type="ChEBI" id="CHEBI:59776"/>
        <dbReference type="EC" id="2.2.1.7"/>
    </reaction>
</comment>
<comment type="cofactor">
    <cofactor evidence="1">
        <name>Mg(2+)</name>
        <dbReference type="ChEBI" id="CHEBI:18420"/>
    </cofactor>
    <text evidence="1">Binds 1 Mg(2+) ion per subunit.</text>
</comment>
<comment type="cofactor">
    <cofactor evidence="1">
        <name>thiamine diphosphate</name>
        <dbReference type="ChEBI" id="CHEBI:58937"/>
    </cofactor>
    <text evidence="1">Binds 1 thiamine pyrophosphate per subunit.</text>
</comment>
<comment type="pathway">
    <text evidence="1">Metabolic intermediate biosynthesis; 1-deoxy-D-xylulose 5-phosphate biosynthesis; 1-deoxy-D-xylulose 5-phosphate from D-glyceraldehyde 3-phosphate and pyruvate: step 1/1.</text>
</comment>
<comment type="subunit">
    <text evidence="1">Homodimer.</text>
</comment>
<comment type="similarity">
    <text evidence="1">Belongs to the transketolase family. DXPS subfamily.</text>
</comment>
<sequence>MIDFTCYPRLSRIQTPEDLRAFQESELRAVADELRNYLIESVGLSGGHFAAGLGVVELTIALHYLYCTPIDQLVWDVGHQTYPHKILTGRRDKISTVKHQGGLAPFPKREESIYDTFGVGHSSTSISAALGMAIVAQRNGDERKVVAIIGDGAMTAGMAYEALNHAGGMSPAPNLLVILNDNRMSISEAVGGLTKMLGRATGSKALNAIREGGKRIFGDKKTNATARFLRRWEEHWKGMFVPSTLFEEMGFHYTGPIDGHDLPALLGALKTLRTLKGPQLLHVITTKGKGYELAEGDQIGYHAVAPFDPQKGLIKAGAKKQTYTDVFSEWLCDMAAVEPRLLAITPAMREGSGLVRFSQEYPQRYFDVAIAEQHAITLAAGMATQGAKPVVAIYSTFLQRGYDQLVHDVALQKLDVLFAVDRGGVVGPDGATHAGNLDLSFLRCVPNMMLMAPADEAECRKMLSTGFHYSGPVAVRYPRGTGPGVVPSAELDVLPVGVAQLRHSGTRIALLGFGVCVAPAEQVGRRLGLTVVNMRFIKPLDRTLLLELARTHEVFVTIEDNVVAGGAGSGVAELLNAEGIVLPIVHLGLPDAFQQHASREDLLAEAGIDAAGVYAALLSRWPDLAVQNHPLSAVS</sequence>
<gene>
    <name evidence="1" type="primary">dxs</name>
    <name type="ordered locus">PD_1293</name>
</gene>
<name>DXS_XYLFT</name>
<organism>
    <name type="scientific">Xylella fastidiosa (strain Temecula1 / ATCC 700964)</name>
    <dbReference type="NCBI Taxonomy" id="183190"/>
    <lineage>
        <taxon>Bacteria</taxon>
        <taxon>Pseudomonadati</taxon>
        <taxon>Pseudomonadota</taxon>
        <taxon>Gammaproteobacteria</taxon>
        <taxon>Lysobacterales</taxon>
        <taxon>Lysobacteraceae</taxon>
        <taxon>Xylella</taxon>
    </lineage>
</organism>
<proteinExistence type="inferred from homology"/>
<reference key="1">
    <citation type="journal article" date="2003" name="J. Bacteriol.">
        <title>Comparative analyses of the complete genome sequences of Pierce's disease and citrus variegated chlorosis strains of Xylella fastidiosa.</title>
        <authorList>
            <person name="Van Sluys M.A."/>
            <person name="de Oliveira M.C."/>
            <person name="Monteiro-Vitorello C.B."/>
            <person name="Miyaki C.Y."/>
            <person name="Furlan L.R."/>
            <person name="Camargo L.E.A."/>
            <person name="da Silva A.C.R."/>
            <person name="Moon D.H."/>
            <person name="Takita M.A."/>
            <person name="Lemos E.G.M."/>
            <person name="Machado M.A."/>
            <person name="Ferro M.I.T."/>
            <person name="da Silva F.R."/>
            <person name="Goldman M.H.S."/>
            <person name="Goldman G.H."/>
            <person name="Lemos M.V.F."/>
            <person name="El-Dorry H."/>
            <person name="Tsai S.M."/>
            <person name="Carrer H."/>
            <person name="Carraro D.M."/>
            <person name="de Oliveira R.C."/>
            <person name="Nunes L.R."/>
            <person name="Siqueira W.J."/>
            <person name="Coutinho L.L."/>
            <person name="Kimura E.T."/>
            <person name="Ferro E.S."/>
            <person name="Harakava R."/>
            <person name="Kuramae E.E."/>
            <person name="Marino C.L."/>
            <person name="Giglioti E."/>
            <person name="Abreu I.L."/>
            <person name="Alves L.M.C."/>
            <person name="do Amaral A.M."/>
            <person name="Baia G.S."/>
            <person name="Blanco S.R."/>
            <person name="Brito M.S."/>
            <person name="Cannavan F.S."/>
            <person name="Celestino A.V."/>
            <person name="da Cunha A.F."/>
            <person name="Fenille R.C."/>
            <person name="Ferro J.A."/>
            <person name="Formighieri E.F."/>
            <person name="Kishi L.T."/>
            <person name="Leoni S.G."/>
            <person name="Oliveira A.R."/>
            <person name="Rosa V.E. Jr."/>
            <person name="Sassaki F.T."/>
            <person name="Sena J.A.D."/>
            <person name="de Souza A.A."/>
            <person name="Truffi D."/>
            <person name="Tsukumo F."/>
            <person name="Yanai G.M."/>
            <person name="Zaros L.G."/>
            <person name="Civerolo E.L."/>
            <person name="Simpson A.J.G."/>
            <person name="Almeida N.F. Jr."/>
            <person name="Setubal J.C."/>
            <person name="Kitajima J.P."/>
        </authorList>
    </citation>
    <scope>NUCLEOTIDE SEQUENCE [LARGE SCALE GENOMIC DNA]</scope>
    <source>
        <strain>Temecula1 / ATCC 700964</strain>
    </source>
</reference>
<protein>
    <recommendedName>
        <fullName evidence="1">1-deoxy-D-xylulose-5-phosphate synthase</fullName>
        <ecNumber evidence="1">2.2.1.7</ecNumber>
    </recommendedName>
    <alternativeName>
        <fullName evidence="1">1-deoxyxylulose-5-phosphate synthase</fullName>
        <shortName evidence="1">DXP synthase</shortName>
        <shortName evidence="1">DXPS</shortName>
    </alternativeName>
</protein>
<accession>Q87C03</accession>
<dbReference type="EC" id="2.2.1.7" evidence="1"/>
<dbReference type="EMBL" id="AE009442">
    <property type="protein sequence ID" value="AAO29142.1"/>
    <property type="molecule type" value="Genomic_DNA"/>
</dbReference>
<dbReference type="RefSeq" id="WP_004088288.1">
    <property type="nucleotide sequence ID" value="NC_004556.1"/>
</dbReference>
<dbReference type="SMR" id="Q87C03"/>
<dbReference type="GeneID" id="93905107"/>
<dbReference type="KEGG" id="xft:PD_1293"/>
<dbReference type="HOGENOM" id="CLU_009227_1_4_6"/>
<dbReference type="UniPathway" id="UPA00064">
    <property type="reaction ID" value="UER00091"/>
</dbReference>
<dbReference type="Proteomes" id="UP000002516">
    <property type="component" value="Chromosome"/>
</dbReference>
<dbReference type="GO" id="GO:0005829">
    <property type="term" value="C:cytosol"/>
    <property type="evidence" value="ECO:0007669"/>
    <property type="project" value="TreeGrafter"/>
</dbReference>
<dbReference type="GO" id="GO:0008661">
    <property type="term" value="F:1-deoxy-D-xylulose-5-phosphate synthase activity"/>
    <property type="evidence" value="ECO:0007669"/>
    <property type="project" value="UniProtKB-UniRule"/>
</dbReference>
<dbReference type="GO" id="GO:0000287">
    <property type="term" value="F:magnesium ion binding"/>
    <property type="evidence" value="ECO:0007669"/>
    <property type="project" value="UniProtKB-UniRule"/>
</dbReference>
<dbReference type="GO" id="GO:0030976">
    <property type="term" value="F:thiamine pyrophosphate binding"/>
    <property type="evidence" value="ECO:0007669"/>
    <property type="project" value="UniProtKB-UniRule"/>
</dbReference>
<dbReference type="GO" id="GO:0052865">
    <property type="term" value="P:1-deoxy-D-xylulose 5-phosphate biosynthetic process"/>
    <property type="evidence" value="ECO:0007669"/>
    <property type="project" value="UniProtKB-UniPathway"/>
</dbReference>
<dbReference type="GO" id="GO:0019288">
    <property type="term" value="P:isopentenyl diphosphate biosynthetic process, methylerythritol 4-phosphate pathway"/>
    <property type="evidence" value="ECO:0007669"/>
    <property type="project" value="TreeGrafter"/>
</dbReference>
<dbReference type="GO" id="GO:0016114">
    <property type="term" value="P:terpenoid biosynthetic process"/>
    <property type="evidence" value="ECO:0007669"/>
    <property type="project" value="UniProtKB-UniRule"/>
</dbReference>
<dbReference type="GO" id="GO:0009228">
    <property type="term" value="P:thiamine biosynthetic process"/>
    <property type="evidence" value="ECO:0007669"/>
    <property type="project" value="UniProtKB-UniRule"/>
</dbReference>
<dbReference type="CDD" id="cd02007">
    <property type="entry name" value="TPP_DXS"/>
    <property type="match status" value="1"/>
</dbReference>
<dbReference type="CDD" id="cd07033">
    <property type="entry name" value="TPP_PYR_DXS_TK_like"/>
    <property type="match status" value="1"/>
</dbReference>
<dbReference type="FunFam" id="3.40.50.920:FF:000002">
    <property type="entry name" value="1-deoxy-D-xylulose-5-phosphate synthase"/>
    <property type="match status" value="1"/>
</dbReference>
<dbReference type="FunFam" id="3.40.50.970:FF:000005">
    <property type="entry name" value="1-deoxy-D-xylulose-5-phosphate synthase"/>
    <property type="match status" value="1"/>
</dbReference>
<dbReference type="Gene3D" id="3.40.50.920">
    <property type="match status" value="1"/>
</dbReference>
<dbReference type="Gene3D" id="3.40.50.970">
    <property type="match status" value="2"/>
</dbReference>
<dbReference type="HAMAP" id="MF_00315">
    <property type="entry name" value="DXP_synth"/>
    <property type="match status" value="1"/>
</dbReference>
<dbReference type="InterPro" id="IPR005477">
    <property type="entry name" value="Dxylulose-5-P_synthase"/>
</dbReference>
<dbReference type="InterPro" id="IPR029061">
    <property type="entry name" value="THDP-binding"/>
</dbReference>
<dbReference type="InterPro" id="IPR009014">
    <property type="entry name" value="Transketo_C/PFOR_II"/>
</dbReference>
<dbReference type="InterPro" id="IPR005475">
    <property type="entry name" value="Transketolase-like_Pyr-bd"/>
</dbReference>
<dbReference type="InterPro" id="IPR020826">
    <property type="entry name" value="Transketolase_BS"/>
</dbReference>
<dbReference type="InterPro" id="IPR033248">
    <property type="entry name" value="Transketolase_C"/>
</dbReference>
<dbReference type="InterPro" id="IPR049557">
    <property type="entry name" value="Transketolase_CS"/>
</dbReference>
<dbReference type="NCBIfam" id="TIGR00204">
    <property type="entry name" value="dxs"/>
    <property type="match status" value="1"/>
</dbReference>
<dbReference type="NCBIfam" id="NF003933">
    <property type="entry name" value="PRK05444.2-2"/>
    <property type="match status" value="1"/>
</dbReference>
<dbReference type="PANTHER" id="PTHR43322">
    <property type="entry name" value="1-D-DEOXYXYLULOSE 5-PHOSPHATE SYNTHASE-RELATED"/>
    <property type="match status" value="1"/>
</dbReference>
<dbReference type="PANTHER" id="PTHR43322:SF5">
    <property type="entry name" value="1-DEOXY-D-XYLULOSE-5-PHOSPHATE SYNTHASE, CHLOROPLASTIC"/>
    <property type="match status" value="1"/>
</dbReference>
<dbReference type="Pfam" id="PF13292">
    <property type="entry name" value="DXP_synthase_N"/>
    <property type="match status" value="1"/>
</dbReference>
<dbReference type="Pfam" id="PF02779">
    <property type="entry name" value="Transket_pyr"/>
    <property type="match status" value="1"/>
</dbReference>
<dbReference type="Pfam" id="PF02780">
    <property type="entry name" value="Transketolase_C"/>
    <property type="match status" value="1"/>
</dbReference>
<dbReference type="SMART" id="SM00861">
    <property type="entry name" value="Transket_pyr"/>
    <property type="match status" value="1"/>
</dbReference>
<dbReference type="SUPFAM" id="SSF52518">
    <property type="entry name" value="Thiamin diphosphate-binding fold (THDP-binding)"/>
    <property type="match status" value="2"/>
</dbReference>
<dbReference type="SUPFAM" id="SSF52922">
    <property type="entry name" value="TK C-terminal domain-like"/>
    <property type="match status" value="1"/>
</dbReference>
<dbReference type="PROSITE" id="PS00801">
    <property type="entry name" value="TRANSKETOLASE_1"/>
    <property type="match status" value="1"/>
</dbReference>
<dbReference type="PROSITE" id="PS00802">
    <property type="entry name" value="TRANSKETOLASE_2"/>
    <property type="match status" value="1"/>
</dbReference>
<evidence type="ECO:0000255" key="1">
    <source>
        <dbReference type="HAMAP-Rule" id="MF_00315"/>
    </source>
</evidence>